<dbReference type="EMBL" id="AY509253">
    <property type="protein sequence ID" value="AAS01004.1"/>
    <property type="molecule type" value="Genomic_DNA"/>
</dbReference>
<dbReference type="RefSeq" id="YP_024657.1">
    <property type="nucleotide sequence ID" value="NC_005881.2"/>
</dbReference>
<dbReference type="KEGG" id="vg:2948268"/>
<dbReference type="Proteomes" id="UP000007021">
    <property type="component" value="Segment"/>
</dbReference>
<keyword id="KW-1185">Reference proteome</keyword>
<proteinExistence type="predicted"/>
<organism>
    <name type="scientific">Ostreid herpesvirus 1 (isolate France)</name>
    <name type="common">OsHV-1</name>
    <name type="synonym">Pacific oyster herpesvirus</name>
    <dbReference type="NCBI Taxonomy" id="654903"/>
    <lineage>
        <taxon>Viruses</taxon>
        <taxon>Duplodnaviria</taxon>
        <taxon>Heunggongvirae</taxon>
        <taxon>Peploviricota</taxon>
        <taxon>Herviviricetes</taxon>
        <taxon>Herpesvirales</taxon>
        <taxon>Malacoherpesviridae</taxon>
        <taxon>Ostreavirus</taxon>
        <taxon>Ostreavirus ostreidmalaco1</taxon>
        <taxon>Ostreid herpesvirus 1</taxon>
    </lineage>
</organism>
<name>Y115_OSHVF</name>
<gene>
    <name type="ORF">ORF115</name>
</gene>
<sequence length="253" mass="28892">MRELIPKEYNVLSITGGQKNERELEKMCNYDVLIYNSAISAGHSIDIKDHFDSVFLVVNSPTPNGRWVTARIDEMFQMAARVRNPITKKIYITTDTFHYRNKACTVNGDEEYYSAAMKSGFDILMSGRNIVPNQLAAMCKSEFEVLVLDWITTKAFPGSIITEEYLNGSQTAEVVLNNDHVFSIQADQFHLAVIEDSLSNPKKYIDCVAGVRRRKAVPVDVFYENEEHIAALKALPYIEYFDSKRQVEVRMLQ</sequence>
<organismHost>
    <name type="scientific">Magallana gigas</name>
    <name type="common">Pacific oyster</name>
    <name type="synonym">Crassostrea gigas</name>
    <dbReference type="NCBI Taxonomy" id="29159"/>
</organismHost>
<organismHost>
    <name type="scientific">Pecten maximus</name>
    <name type="common">King scallop</name>
    <name type="synonym">Pilgrim's clam</name>
    <dbReference type="NCBI Taxonomy" id="6579"/>
</organismHost>
<feature type="chain" id="PRO_0000385129" description="Uncharacterized protein ORF115">
    <location>
        <begin position="1"/>
        <end position="253"/>
    </location>
</feature>
<accession>Q6R7B1</accession>
<reference key="1">
    <citation type="journal article" date="2005" name="J. Gen. Virol.">
        <title>A novel class of herpesvirus with bivalve hosts.</title>
        <authorList>
            <person name="Davison A.J."/>
            <person name="Trus B.L."/>
            <person name="Cheng N."/>
            <person name="Steven A.C."/>
            <person name="Watson M.S."/>
            <person name="Cunningham C."/>
            <person name="Le Deuff R.M."/>
            <person name="Renault T."/>
        </authorList>
    </citation>
    <scope>NUCLEOTIDE SEQUENCE [LARGE SCALE GENOMIC DNA]</scope>
</reference>
<protein>
    <recommendedName>
        <fullName>Uncharacterized protein ORF115</fullName>
    </recommendedName>
</protein>